<accession>A5W5D5</accession>
<organism>
    <name type="scientific">Pseudomonas putida (strain ATCC 700007 / DSM 6899 / JCM 31910 / BCRC 17059 / LMG 24140 / F1)</name>
    <dbReference type="NCBI Taxonomy" id="351746"/>
    <lineage>
        <taxon>Bacteria</taxon>
        <taxon>Pseudomonadati</taxon>
        <taxon>Pseudomonadota</taxon>
        <taxon>Gammaproteobacteria</taxon>
        <taxon>Pseudomonadales</taxon>
        <taxon>Pseudomonadaceae</taxon>
        <taxon>Pseudomonas</taxon>
    </lineage>
</organism>
<dbReference type="EMBL" id="CP000712">
    <property type="protein sequence ID" value="ABQ79345.1"/>
    <property type="molecule type" value="Genomic_DNA"/>
</dbReference>
<dbReference type="SMR" id="A5W5D5"/>
<dbReference type="KEGG" id="ppf:Pput_3219"/>
<dbReference type="eggNOG" id="COG0776">
    <property type="taxonomic scope" value="Bacteria"/>
</dbReference>
<dbReference type="HOGENOM" id="CLU_105066_1_3_6"/>
<dbReference type="GO" id="GO:0005829">
    <property type="term" value="C:cytosol"/>
    <property type="evidence" value="ECO:0007669"/>
    <property type="project" value="TreeGrafter"/>
</dbReference>
<dbReference type="GO" id="GO:0003677">
    <property type="term" value="F:DNA binding"/>
    <property type="evidence" value="ECO:0007669"/>
    <property type="project" value="UniProtKB-UniRule"/>
</dbReference>
<dbReference type="GO" id="GO:0030527">
    <property type="term" value="F:structural constituent of chromatin"/>
    <property type="evidence" value="ECO:0007669"/>
    <property type="project" value="InterPro"/>
</dbReference>
<dbReference type="GO" id="GO:0006310">
    <property type="term" value="P:DNA recombination"/>
    <property type="evidence" value="ECO:0007669"/>
    <property type="project" value="UniProtKB-UniRule"/>
</dbReference>
<dbReference type="GO" id="GO:0009893">
    <property type="term" value="P:positive regulation of metabolic process"/>
    <property type="evidence" value="ECO:0007669"/>
    <property type="project" value="UniProtKB-ARBA"/>
</dbReference>
<dbReference type="GO" id="GO:0006355">
    <property type="term" value="P:regulation of DNA-templated transcription"/>
    <property type="evidence" value="ECO:0007669"/>
    <property type="project" value="UniProtKB-UniRule"/>
</dbReference>
<dbReference type="GO" id="GO:0006417">
    <property type="term" value="P:regulation of translation"/>
    <property type="evidence" value="ECO:0007669"/>
    <property type="project" value="UniProtKB-UniRule"/>
</dbReference>
<dbReference type="CDD" id="cd13835">
    <property type="entry name" value="IHF_A"/>
    <property type="match status" value="1"/>
</dbReference>
<dbReference type="FunFam" id="4.10.520.10:FF:000002">
    <property type="entry name" value="Integration host factor subunit alpha"/>
    <property type="match status" value="1"/>
</dbReference>
<dbReference type="Gene3D" id="4.10.520.10">
    <property type="entry name" value="IHF-like DNA-binding proteins"/>
    <property type="match status" value="1"/>
</dbReference>
<dbReference type="HAMAP" id="MF_00380">
    <property type="entry name" value="IHF_alpha"/>
    <property type="match status" value="1"/>
</dbReference>
<dbReference type="InterPro" id="IPR000119">
    <property type="entry name" value="Hist_DNA-bd"/>
</dbReference>
<dbReference type="InterPro" id="IPR020816">
    <property type="entry name" value="Histone-like_DNA-bd_CS"/>
</dbReference>
<dbReference type="InterPro" id="IPR010992">
    <property type="entry name" value="IHF-like_DNA-bd_dom_sf"/>
</dbReference>
<dbReference type="InterPro" id="IPR005684">
    <property type="entry name" value="IHF_alpha"/>
</dbReference>
<dbReference type="NCBIfam" id="TIGR00987">
    <property type="entry name" value="himA"/>
    <property type="match status" value="1"/>
</dbReference>
<dbReference type="NCBIfam" id="NF001401">
    <property type="entry name" value="PRK00285.1"/>
    <property type="match status" value="1"/>
</dbReference>
<dbReference type="PANTHER" id="PTHR33175">
    <property type="entry name" value="DNA-BINDING PROTEIN HU"/>
    <property type="match status" value="1"/>
</dbReference>
<dbReference type="PANTHER" id="PTHR33175:SF2">
    <property type="entry name" value="INTEGRATION HOST FACTOR SUBUNIT ALPHA"/>
    <property type="match status" value="1"/>
</dbReference>
<dbReference type="Pfam" id="PF00216">
    <property type="entry name" value="Bac_DNA_binding"/>
    <property type="match status" value="1"/>
</dbReference>
<dbReference type="PRINTS" id="PR01727">
    <property type="entry name" value="DNABINDINGHU"/>
</dbReference>
<dbReference type="SMART" id="SM00411">
    <property type="entry name" value="BHL"/>
    <property type="match status" value="1"/>
</dbReference>
<dbReference type="SUPFAM" id="SSF47729">
    <property type="entry name" value="IHF-like DNA-binding proteins"/>
    <property type="match status" value="1"/>
</dbReference>
<dbReference type="PROSITE" id="PS00045">
    <property type="entry name" value="HISTONE_LIKE"/>
    <property type="match status" value="1"/>
</dbReference>
<keyword id="KW-0233">DNA recombination</keyword>
<keyword id="KW-0238">DNA-binding</keyword>
<keyword id="KW-0804">Transcription</keyword>
<keyword id="KW-0805">Transcription regulation</keyword>
<keyword id="KW-0810">Translation regulation</keyword>
<sequence>MGALTKAEMAERLYEELGLNKREAKELVELFFEEIRHALEENEQVKLSGFGNFDLRDKRQRPGRNPKTGEEIPITARRVVTFRPGQKLKARVEAYAGTKP</sequence>
<protein>
    <recommendedName>
        <fullName evidence="1">Integration host factor subunit alpha</fullName>
        <shortName evidence="1">IHF-alpha</shortName>
    </recommendedName>
</protein>
<evidence type="ECO:0000255" key="1">
    <source>
        <dbReference type="HAMAP-Rule" id="MF_00380"/>
    </source>
</evidence>
<evidence type="ECO:0000256" key="2">
    <source>
        <dbReference type="SAM" id="MobiDB-lite"/>
    </source>
</evidence>
<name>IHFA_PSEP1</name>
<proteinExistence type="inferred from homology"/>
<gene>
    <name evidence="1" type="primary">ihfA</name>
    <name evidence="1" type="synonym">himA</name>
    <name type="ordered locus">Pput_3219</name>
</gene>
<feature type="chain" id="PRO_1000060557" description="Integration host factor subunit alpha">
    <location>
        <begin position="1"/>
        <end position="100"/>
    </location>
</feature>
<feature type="region of interest" description="Disordered" evidence="2">
    <location>
        <begin position="53"/>
        <end position="72"/>
    </location>
</feature>
<comment type="function">
    <text evidence="1">This protein is one of the two subunits of integration host factor, a specific DNA-binding protein that functions in genetic recombination as well as in transcriptional and translational control.</text>
</comment>
<comment type="subunit">
    <text evidence="1">Heterodimer of an alpha and a beta chain.</text>
</comment>
<comment type="similarity">
    <text evidence="1">Belongs to the bacterial histone-like protein family.</text>
</comment>
<reference key="1">
    <citation type="submission" date="2007-05" db="EMBL/GenBank/DDBJ databases">
        <title>Complete sequence of Pseudomonas putida F1.</title>
        <authorList>
            <consortium name="US DOE Joint Genome Institute"/>
            <person name="Copeland A."/>
            <person name="Lucas S."/>
            <person name="Lapidus A."/>
            <person name="Barry K."/>
            <person name="Detter J.C."/>
            <person name="Glavina del Rio T."/>
            <person name="Hammon N."/>
            <person name="Israni S."/>
            <person name="Dalin E."/>
            <person name="Tice H."/>
            <person name="Pitluck S."/>
            <person name="Chain P."/>
            <person name="Malfatti S."/>
            <person name="Shin M."/>
            <person name="Vergez L."/>
            <person name="Schmutz J."/>
            <person name="Larimer F."/>
            <person name="Land M."/>
            <person name="Hauser L."/>
            <person name="Kyrpides N."/>
            <person name="Lykidis A."/>
            <person name="Parales R."/>
            <person name="Richardson P."/>
        </authorList>
    </citation>
    <scope>NUCLEOTIDE SEQUENCE [LARGE SCALE GENOMIC DNA]</scope>
    <source>
        <strain>ATCC 700007 / DSM 6899 / JCM 31910 / BCRC 17059 / LMG 24140 / F1</strain>
    </source>
</reference>